<reference key="1">
    <citation type="submission" date="2007-02" db="EMBL/GenBank/DDBJ databases">
        <title>The NIAID influenza genome sequencing project.</title>
        <authorList>
            <person name="Ghedin E."/>
            <person name="Spiro D."/>
            <person name="Miller N."/>
            <person name="Zaborsky J."/>
            <person name="Feldblyum T."/>
            <person name="Subbu V."/>
            <person name="Shumway M."/>
            <person name="Sparenborg J."/>
            <person name="Groveman L."/>
            <person name="Halpin R."/>
            <person name="Sitz J."/>
            <person name="Koo H."/>
            <person name="Salzberg S.L."/>
            <person name="Webster R.G."/>
            <person name="Hoffmann E."/>
            <person name="Krauss S."/>
            <person name="Naeve C."/>
            <person name="Bao Y."/>
            <person name="Bolotov P."/>
            <person name="Dernovoy D."/>
            <person name="Kiryutin B."/>
            <person name="Lipman D.J."/>
            <person name="Tatusova T."/>
        </authorList>
    </citation>
    <scope>NUCLEOTIDE SEQUENCE [GENOMIC RNA]</scope>
</reference>
<reference key="2">
    <citation type="submission" date="2007-02" db="EMBL/GenBank/DDBJ databases">
        <authorList>
            <consortium name="The NIAID Influenza Genome Sequencing Consortium"/>
        </authorList>
    </citation>
    <scope>NUCLEOTIDE SEQUENCE [GENOMIC RNA]</scope>
</reference>
<sequence length="97" mass="11149">MSLLTEVETPIRNEWGCRCNDSSDPLVVAASIIGIVHLILWIIDRLFFKCIYRIFKHGLKRGPSTEGVPESMREEYREEQQNAVDADEGHFVSIELE</sequence>
<accession>A3DRP1</accession>
<proteinExistence type="inferred from homology"/>
<evidence type="ECO:0000255" key="1">
    <source>
        <dbReference type="HAMAP-Rule" id="MF_04069"/>
    </source>
</evidence>
<evidence type="ECO:0000256" key="2">
    <source>
        <dbReference type="SAM" id="MobiDB-lite"/>
    </source>
</evidence>
<dbReference type="EMBL" id="CY019796">
    <property type="protein sequence ID" value="ABN50964.1"/>
    <property type="molecule type" value="Viral_cRNA"/>
</dbReference>
<dbReference type="SMR" id="A3DRP1"/>
<dbReference type="GlyCosmos" id="A3DRP1">
    <property type="glycosylation" value="1 site, No reported glycans"/>
</dbReference>
<dbReference type="Proteomes" id="UP000007557">
    <property type="component" value="Genome"/>
</dbReference>
<dbReference type="GO" id="GO:0020002">
    <property type="term" value="C:host cell plasma membrane"/>
    <property type="evidence" value="ECO:0007669"/>
    <property type="project" value="UniProtKB-SubCell"/>
</dbReference>
<dbReference type="GO" id="GO:0016020">
    <property type="term" value="C:membrane"/>
    <property type="evidence" value="ECO:0007669"/>
    <property type="project" value="UniProtKB-UniRule"/>
</dbReference>
<dbReference type="GO" id="GO:0055036">
    <property type="term" value="C:virion membrane"/>
    <property type="evidence" value="ECO:0007669"/>
    <property type="project" value="UniProtKB-SubCell"/>
</dbReference>
<dbReference type="GO" id="GO:0005216">
    <property type="term" value="F:monoatomic ion channel activity"/>
    <property type="evidence" value="ECO:0007669"/>
    <property type="project" value="UniProtKB-UniRule"/>
</dbReference>
<dbReference type="GO" id="GO:0015078">
    <property type="term" value="F:proton transmembrane transporter activity"/>
    <property type="evidence" value="ECO:0007669"/>
    <property type="project" value="UniProtKB-UniRule"/>
</dbReference>
<dbReference type="GO" id="GO:0051259">
    <property type="term" value="P:protein complex oligomerization"/>
    <property type="evidence" value="ECO:0007669"/>
    <property type="project" value="UniProtKB-UniRule"/>
</dbReference>
<dbReference type="GO" id="GO:0044694">
    <property type="term" value="P:symbiont genome entry into host cell via pore formation in plasma membrane"/>
    <property type="evidence" value="ECO:0007669"/>
    <property type="project" value="UniProtKB-UniRule"/>
</dbReference>
<dbReference type="GO" id="GO:0140321">
    <property type="term" value="P:symbiont-mediated suppression of host autophagy"/>
    <property type="evidence" value="ECO:0007669"/>
    <property type="project" value="UniProtKB-KW"/>
</dbReference>
<dbReference type="Gene3D" id="6.10.250.1640">
    <property type="match status" value="1"/>
</dbReference>
<dbReference type="HAMAP" id="MF_04069">
    <property type="entry name" value="INFV_M2"/>
    <property type="match status" value="1"/>
</dbReference>
<dbReference type="InterPro" id="IPR002089">
    <property type="entry name" value="Flu_M2"/>
</dbReference>
<dbReference type="Pfam" id="PF00599">
    <property type="entry name" value="Flu_M2"/>
    <property type="match status" value="1"/>
</dbReference>
<keyword id="KW-0025">Alternative splicing</keyword>
<keyword id="KW-1015">Disulfide bond</keyword>
<keyword id="KW-0325">Glycoprotein</keyword>
<keyword id="KW-1032">Host cell membrane</keyword>
<keyword id="KW-1043">Host membrane</keyword>
<keyword id="KW-0945">Host-virus interaction</keyword>
<keyword id="KW-0375">Hydrogen ion transport</keyword>
<keyword id="KW-1083">Inhibition of host autophagy by virus</keyword>
<keyword id="KW-0407">Ion channel</keyword>
<keyword id="KW-0406">Ion transport</keyword>
<keyword id="KW-0449">Lipoprotein</keyword>
<keyword id="KW-0472">Membrane</keyword>
<keyword id="KW-0564">Palmitate</keyword>
<keyword id="KW-0597">Phosphoprotein</keyword>
<keyword id="KW-0735">Signal-anchor</keyword>
<keyword id="KW-0812">Transmembrane</keyword>
<keyword id="KW-1133">Transmembrane helix</keyword>
<keyword id="KW-0813">Transport</keyword>
<keyword id="KW-1182">Viral ion channel</keyword>
<keyword id="KW-0946">Virion</keyword>
<protein>
    <recommendedName>
        <fullName evidence="1">Matrix protein 2</fullName>
    </recommendedName>
    <alternativeName>
        <fullName evidence="1">Proton channel protein M2</fullName>
    </alternativeName>
</protein>
<organism>
    <name type="scientific">Influenza A virus (strain A/USA:Memphis/10/1996 H1N1)</name>
    <dbReference type="NCBI Taxonomy" id="416730"/>
    <lineage>
        <taxon>Viruses</taxon>
        <taxon>Riboviria</taxon>
        <taxon>Orthornavirae</taxon>
        <taxon>Negarnaviricota</taxon>
        <taxon>Polyploviricotina</taxon>
        <taxon>Insthoviricetes</taxon>
        <taxon>Articulavirales</taxon>
        <taxon>Orthomyxoviridae</taxon>
        <taxon>Alphainfluenzavirus</taxon>
        <taxon>Alphainfluenzavirus influenzae</taxon>
        <taxon>Influenza A virus</taxon>
    </lineage>
</organism>
<name>M2_I96A2</name>
<comment type="function">
    <text evidence="1">Forms a proton-selective ion channel that is necessary for the efficient release of the viral genome during virus entry. After attaching to the cell surface, the virion enters the cell by endocytosis. Acidification of the endosome triggers M2 ion channel activity. The influx of protons into virion interior is believed to disrupt interactions between the viral ribonucleoprotein (RNP), matrix protein 1 (M1), and lipid bilayers, thereby freeing the viral genome from interaction with viral proteins and enabling RNA segments to migrate to the host cell nucleus, where influenza virus RNA transcription and replication occur. Also plays a role in viral proteins secretory pathway. Elevates the intravesicular pH of normally acidic compartments, such as trans-Golgi network, preventing newly formed hemagglutinin from premature switching to the fusion-active conformation.</text>
</comment>
<comment type="activity regulation">
    <text>The M2 protein from most influenza A strains is inhibited by amantadine and rimantadine, resulting in viral uncoating incapacity. Emergence of amantadine-resistant variants is usually rapid.</text>
</comment>
<comment type="subunit">
    <text evidence="1">Homotetramer; composed of two disulfide-linked dimers held together by non-covalent interactions. May interact with matrix protein 1.</text>
</comment>
<comment type="subcellular location">
    <subcellularLocation>
        <location evidence="1">Virion membrane</location>
    </subcellularLocation>
    <subcellularLocation>
        <location evidence="1">Host apical cell membrane</location>
        <topology evidence="1">Single-pass type III membrane protein</topology>
    </subcellularLocation>
    <text evidence="1">Abundantly expressed at the apical plasma membrane in infected polarized epithelial cells, in close proximity to budding and assembled virions. Minor component of virions (only 16-20 molecules/virion).</text>
</comment>
<comment type="alternative products">
    <event type="alternative splicing"/>
    <isoform>
        <id>A3DRP1-1</id>
        <name>M2</name>
        <sequence type="displayed"/>
    </isoform>
    <isoform>
        <id>A3DRP2-1</id>
        <name>M1</name>
        <sequence type="external"/>
    </isoform>
    <text>Only the first 9 residues are shared by the 2 isoforms.</text>
</comment>
<comment type="domain">
    <text evidence="1">Cytoplasmic tail plays an important role in virion assembly and morphogenesis.</text>
</comment>
<comment type="miscellaneous">
    <text evidence="1">When the channel is activated, one or more imidazole moieties of His-37 probably become bi-protonated.</text>
</comment>
<comment type="similarity">
    <text evidence="1">Belongs to the influenza viruses matrix protein M2 family.</text>
</comment>
<organismHost>
    <name type="scientific">Aves</name>
    <dbReference type="NCBI Taxonomy" id="8782"/>
</organismHost>
<organismHost>
    <name type="scientific">Homo sapiens</name>
    <name type="common">Human</name>
    <dbReference type="NCBI Taxonomy" id="9606"/>
</organismHost>
<organismHost>
    <name type="scientific">Sus scrofa</name>
    <name type="common">Pig</name>
    <dbReference type="NCBI Taxonomy" id="9823"/>
</organismHost>
<gene>
    <name evidence="1" type="primary">M</name>
    <name type="synonym">M2</name>
</gene>
<feature type="chain" id="PRO_0000372929" description="Matrix protein 2">
    <location>
        <begin position="1"/>
        <end position="97"/>
    </location>
</feature>
<feature type="topological domain" description="Virion surface" evidence="1">
    <location>
        <begin position="1"/>
        <end position="22"/>
    </location>
</feature>
<feature type="transmembrane region" description="Helical; Signal-anchor for type III membrane protein" evidence="1">
    <location>
        <begin position="23"/>
        <end position="43"/>
    </location>
</feature>
<feature type="topological domain" description="Intravirion" evidence="1">
    <location>
        <begin position="44"/>
        <end position="97"/>
    </location>
</feature>
<feature type="region of interest" description="Disordered" evidence="2">
    <location>
        <begin position="60"/>
        <end position="88"/>
    </location>
</feature>
<feature type="compositionally biased region" description="Basic and acidic residues" evidence="2">
    <location>
        <begin position="71"/>
        <end position="80"/>
    </location>
</feature>
<feature type="site" description="Essential for channel activity, possibly by being protonated during channel activation, and by forming the channel gate and the selective filter" evidence="1">
    <location>
        <position position="37"/>
    </location>
</feature>
<feature type="site" description="Seems to be involved in pH gating" evidence="1">
    <location>
        <position position="41"/>
    </location>
</feature>
<feature type="modified residue" description="Phosphoserine; by host" evidence="1">
    <location>
        <position position="64"/>
    </location>
</feature>
<feature type="modified residue" description="Phosphoserine; by host" evidence="1">
    <location>
        <position position="93"/>
    </location>
</feature>
<feature type="lipid moiety-binding region" description="S-palmitoyl cysteine; by host" evidence="1">
    <location>
        <position position="50"/>
    </location>
</feature>
<feature type="glycosylation site" description="N-linked (GlcNAc...) asparagine; by host" evidence="1">
    <location>
        <position position="20"/>
    </location>
</feature>
<feature type="disulfide bond" description="Interchain (with C-17)" evidence="1">
    <location>
        <position position="17"/>
    </location>
</feature>
<feature type="disulfide bond" description="Interchain (with C-19)" evidence="1">
    <location>
        <position position="19"/>
    </location>
</feature>